<comment type="function">
    <text evidence="2">Phosphorylates inhibitors of NF-kappa-B thus leading to the dissociation of the inhibitor/NF-kappa-B complex and ultimately the degradation of the inhibitor. Phosphorylates 'Ser-10' of histone H3 at NF-kappa-B-regulated promoters during inflammatory responses triggered by cytokines.</text>
</comment>
<comment type="catalytic activity">
    <reaction evidence="2">
        <text>L-seryl-[I-kappa-B protein] + ATP = O-phospho-L-seryl-[I-kappa-B protein] + ADP + H(+)</text>
        <dbReference type="Rhea" id="RHEA:19073"/>
        <dbReference type="Rhea" id="RHEA-COMP:13698"/>
        <dbReference type="Rhea" id="RHEA-COMP:13699"/>
        <dbReference type="ChEBI" id="CHEBI:15378"/>
        <dbReference type="ChEBI" id="CHEBI:29999"/>
        <dbReference type="ChEBI" id="CHEBI:30616"/>
        <dbReference type="ChEBI" id="CHEBI:83421"/>
        <dbReference type="ChEBI" id="CHEBI:456216"/>
        <dbReference type="EC" id="2.7.11.10"/>
    </reaction>
</comment>
<comment type="activity regulation">
    <text evidence="1">Activated when phosphorylated and inactivated when dephosphorylated.</text>
</comment>
<comment type="subcellular location">
    <subcellularLocation>
        <location evidence="1">Cytoplasm</location>
    </subcellularLocation>
    <subcellularLocation>
        <location evidence="1">Nucleus</location>
    </subcellularLocation>
    <text evidence="1">Shuttles between the cytoplasm and the nucleus.</text>
</comment>
<comment type="similarity">
    <text evidence="3">Belongs to the protein kinase superfamily. Ser/Thr protein kinase family. I-kappa-B kinase subfamily.</text>
</comment>
<proteinExistence type="evidence at transcript level"/>
<name>IKKA_XENTR</name>
<sequence>MEKPPVQHGAVCGPWDMKDRLGTGGFGNVCLYQNRETGELKAIKSCRLELSMKNKERWCQEIQIMKRLNHPNVVKACEVPPEMDFLVNDVPHLAMEYCAGGDLRKLLNKPENCCGLKESQVLNLMSDIGSGIQYLHEKRIIHRDLKPENIVLQECNGKTVHKIIDLGYAKDLDQGSLCTSFVGTLQYLAPELFENKPYSVTVDYWSFGTMVFECIAGFRPFLHNMQPFTWHEKIKKKDHKHIYAYEEMSGEIRFSSYLPQPNNLCSIIVDKIETWLQLLLNWDPIQRGGGMDCGRPQCFVLMDQILNLKIVHILNMTSAKIHSFHLQPEESLHTLQSRIETETGISTCNQELLLEMGVSLDPRKPASQCVIDGVKGWDSYMVYLFDKSKTVYEGPFQSRSLSECLNYIVQDSKVQLPIPQLRKVWAEAVHYVSGLKEDYSRLFQGQRAAMLSLLRFNTNLTKMKNTMVSASQQLGAKLQFFKRSIEIDLERYSDQMAYGISSEKMLRAWKEMEDKAVCFGKAGKIHFLDETIMGLHTEIVELQKSPCARRQGDVMEHLEQRAMELYKQLKPRSPDKAYSDSTEMVKILVQTVQGQDRVLKELFGHLSKLLGCKQKIIDLLPQIEMTVNNIKEADSSLMQMQAKRQREIWHLLKIACTQSSARSLGPASVETPITPRTSAWPDQSSSQALFSMLTTKDKSREILRHTIDKNSDYQKLLSSLILQTQTTMEQNSLMSLDFSWLNK</sequence>
<accession>Q28DZ1</accession>
<dbReference type="EC" id="2.7.11.10" evidence="2"/>
<dbReference type="EMBL" id="CR848527">
    <property type="protein sequence ID" value="CAJ83676.1"/>
    <property type="molecule type" value="mRNA"/>
</dbReference>
<dbReference type="RefSeq" id="NP_001016900.1">
    <property type="nucleotide sequence ID" value="NM_001016900.3"/>
</dbReference>
<dbReference type="RefSeq" id="NP_001297046.1">
    <property type="nucleotide sequence ID" value="NM_001310117.1"/>
</dbReference>
<dbReference type="SMR" id="Q28DZ1"/>
<dbReference type="FunCoup" id="Q28DZ1">
    <property type="interactions" value="2395"/>
</dbReference>
<dbReference type="STRING" id="8364.ENSXETP00000017368"/>
<dbReference type="PaxDb" id="8364-ENSXETP00000038296"/>
<dbReference type="GeneID" id="549654"/>
<dbReference type="KEGG" id="xtr:549654"/>
<dbReference type="AGR" id="Xenbase:XB-GENE-5910008"/>
<dbReference type="CTD" id="1147"/>
<dbReference type="Xenbase" id="XB-GENE-5910008">
    <property type="gene designation" value="chuk"/>
</dbReference>
<dbReference type="eggNOG" id="KOG4250">
    <property type="taxonomic scope" value="Eukaryota"/>
</dbReference>
<dbReference type="HOGENOM" id="CLU_000288_101_2_1"/>
<dbReference type="InParanoid" id="Q28DZ1"/>
<dbReference type="OMA" id="FILMDHI"/>
<dbReference type="OrthoDB" id="267381at2759"/>
<dbReference type="Reactome" id="R-XTR-5607761">
    <property type="pathway name" value="Dectin-1 mediated noncanonical NF-kB signaling"/>
</dbReference>
<dbReference type="Reactome" id="R-XTR-5676590">
    <property type="pathway name" value="NIK--&gt;noncanonical NF-kB signaling"/>
</dbReference>
<dbReference type="Proteomes" id="UP000008143">
    <property type="component" value="Chromosome 7"/>
</dbReference>
<dbReference type="Bgee" id="ENSXETG00000017643">
    <property type="expression patterns" value="Expressed in egg cell and 13 other cell types or tissues"/>
</dbReference>
<dbReference type="GO" id="GO:0005737">
    <property type="term" value="C:cytoplasm"/>
    <property type="evidence" value="ECO:0007669"/>
    <property type="project" value="UniProtKB-SubCell"/>
</dbReference>
<dbReference type="GO" id="GO:0005634">
    <property type="term" value="C:nucleus"/>
    <property type="evidence" value="ECO:0007669"/>
    <property type="project" value="UniProtKB-SubCell"/>
</dbReference>
<dbReference type="GO" id="GO:0005524">
    <property type="term" value="F:ATP binding"/>
    <property type="evidence" value="ECO:0007669"/>
    <property type="project" value="UniProtKB-KW"/>
</dbReference>
<dbReference type="GO" id="GO:0008384">
    <property type="term" value="F:IkappaB kinase activity"/>
    <property type="evidence" value="ECO:0007669"/>
    <property type="project" value="UniProtKB-EC"/>
</dbReference>
<dbReference type="GO" id="GO:0046982">
    <property type="term" value="F:protein heterodimerization activity"/>
    <property type="evidence" value="ECO:0000250"/>
    <property type="project" value="UniProtKB"/>
</dbReference>
<dbReference type="GO" id="GO:0042803">
    <property type="term" value="F:protein homodimerization activity"/>
    <property type="evidence" value="ECO:0000250"/>
    <property type="project" value="UniProtKB"/>
</dbReference>
<dbReference type="GO" id="GO:0071356">
    <property type="term" value="P:cellular response to tumor necrosis factor"/>
    <property type="evidence" value="ECO:0000250"/>
    <property type="project" value="UniProtKB"/>
</dbReference>
<dbReference type="GO" id="GO:0045944">
    <property type="term" value="P:positive regulation of transcription by RNA polymerase II"/>
    <property type="evidence" value="ECO:0000250"/>
    <property type="project" value="UniProtKB"/>
</dbReference>
<dbReference type="CDD" id="cd17046">
    <property type="entry name" value="Ubl_IKKA_like"/>
    <property type="match status" value="1"/>
</dbReference>
<dbReference type="FunFam" id="1.20.1270.250:FF:000001">
    <property type="entry name" value="Inhibitor of nuclear factor kappa-B kinase subunit alpha"/>
    <property type="match status" value="1"/>
</dbReference>
<dbReference type="FunFam" id="3.10.20.90:FF:000061">
    <property type="entry name" value="Inhibitor of nuclear factor kappa-B kinase subunit alpha"/>
    <property type="match status" value="1"/>
</dbReference>
<dbReference type="FunFam" id="1.10.510.10:FF:000147">
    <property type="entry name" value="Inhibitor of nuclear factor kappa-B kinase subunit beta"/>
    <property type="match status" value="1"/>
</dbReference>
<dbReference type="Gene3D" id="1.20.1270.250">
    <property type="match status" value="1"/>
</dbReference>
<dbReference type="Gene3D" id="3.10.20.90">
    <property type="entry name" value="Phosphatidylinositol 3-kinase Catalytic Subunit, Chain A, domain 1"/>
    <property type="match status" value="1"/>
</dbReference>
<dbReference type="Gene3D" id="1.10.510.10">
    <property type="entry name" value="Transferase(Phosphotransferase) domain 1"/>
    <property type="match status" value="1"/>
</dbReference>
<dbReference type="InterPro" id="IPR041185">
    <property type="entry name" value="IKBKB_SDD"/>
</dbReference>
<dbReference type="InterPro" id="IPR046375">
    <property type="entry name" value="IKBKB_SDD_sf"/>
</dbReference>
<dbReference type="InterPro" id="IPR051180">
    <property type="entry name" value="IKK"/>
</dbReference>
<dbReference type="InterPro" id="IPR011009">
    <property type="entry name" value="Kinase-like_dom_sf"/>
</dbReference>
<dbReference type="InterPro" id="IPR000719">
    <property type="entry name" value="Prot_kinase_dom"/>
</dbReference>
<dbReference type="InterPro" id="IPR008271">
    <property type="entry name" value="Ser/Thr_kinase_AS"/>
</dbReference>
<dbReference type="PANTHER" id="PTHR22969">
    <property type="entry name" value="IKB KINASE"/>
    <property type="match status" value="1"/>
</dbReference>
<dbReference type="PANTHER" id="PTHR22969:SF13">
    <property type="entry name" value="INHIBITOR OF NUCLEAR FACTOR KAPPA-B KINASE SUBUNIT ALPHA"/>
    <property type="match status" value="1"/>
</dbReference>
<dbReference type="Pfam" id="PF18397">
    <property type="entry name" value="IKBKB_SDD"/>
    <property type="match status" value="1"/>
</dbReference>
<dbReference type="Pfam" id="PF00069">
    <property type="entry name" value="Pkinase"/>
    <property type="match status" value="1"/>
</dbReference>
<dbReference type="SMART" id="SM00220">
    <property type="entry name" value="S_TKc"/>
    <property type="match status" value="1"/>
</dbReference>
<dbReference type="SUPFAM" id="SSF56112">
    <property type="entry name" value="Protein kinase-like (PK-like)"/>
    <property type="match status" value="1"/>
</dbReference>
<dbReference type="PROSITE" id="PS50011">
    <property type="entry name" value="PROTEIN_KINASE_DOM"/>
    <property type="match status" value="1"/>
</dbReference>
<dbReference type="PROSITE" id="PS00108">
    <property type="entry name" value="PROTEIN_KINASE_ST"/>
    <property type="match status" value="1"/>
</dbReference>
<reference key="1">
    <citation type="submission" date="2006-10" db="EMBL/GenBank/DDBJ databases">
        <authorList>
            <consortium name="Sanger Xenopus tropicalis EST/cDNA project"/>
        </authorList>
    </citation>
    <scope>NUCLEOTIDE SEQUENCE [LARGE SCALE MRNA]</scope>
    <source>
        <tissue>Egg</tissue>
    </source>
</reference>
<organism>
    <name type="scientific">Xenopus tropicalis</name>
    <name type="common">Western clawed frog</name>
    <name type="synonym">Silurana tropicalis</name>
    <dbReference type="NCBI Taxonomy" id="8364"/>
    <lineage>
        <taxon>Eukaryota</taxon>
        <taxon>Metazoa</taxon>
        <taxon>Chordata</taxon>
        <taxon>Craniata</taxon>
        <taxon>Vertebrata</taxon>
        <taxon>Euteleostomi</taxon>
        <taxon>Amphibia</taxon>
        <taxon>Batrachia</taxon>
        <taxon>Anura</taxon>
        <taxon>Pipoidea</taxon>
        <taxon>Pipidae</taxon>
        <taxon>Xenopodinae</taxon>
        <taxon>Xenopus</taxon>
        <taxon>Silurana</taxon>
    </lineage>
</organism>
<feature type="chain" id="PRO_0000268829" description="Inhibitor of nuclear factor kappa-B kinase subunit alpha">
    <location>
        <begin position="1"/>
        <end position="743"/>
    </location>
</feature>
<feature type="domain" description="Protein kinase" evidence="3">
    <location>
        <begin position="15"/>
        <end position="300"/>
    </location>
</feature>
<feature type="region of interest" description="Leucine-zipper">
    <location>
        <begin position="453"/>
        <end position="474"/>
    </location>
</feature>
<feature type="region of interest" description="NEMO-binding" evidence="1">
    <location>
        <begin position="736"/>
        <end position="741"/>
    </location>
</feature>
<feature type="active site" description="Proton acceptor" evidence="3 4">
    <location>
        <position position="144"/>
    </location>
</feature>
<feature type="binding site" evidence="3">
    <location>
        <begin position="21"/>
        <end position="29"/>
    </location>
    <ligand>
        <name>ATP</name>
        <dbReference type="ChEBI" id="CHEBI:30616"/>
    </ligand>
</feature>
<feature type="binding site" evidence="3">
    <location>
        <position position="44"/>
    </location>
    <ligand>
        <name>ATP</name>
        <dbReference type="ChEBI" id="CHEBI:30616"/>
    </ligand>
</feature>
<keyword id="KW-0067">ATP-binding</keyword>
<keyword id="KW-0963">Cytoplasm</keyword>
<keyword id="KW-0418">Kinase</keyword>
<keyword id="KW-0547">Nucleotide-binding</keyword>
<keyword id="KW-0539">Nucleus</keyword>
<keyword id="KW-0597">Phosphoprotein</keyword>
<keyword id="KW-1185">Reference proteome</keyword>
<keyword id="KW-0723">Serine/threonine-protein kinase</keyword>
<keyword id="KW-0808">Transferase</keyword>
<evidence type="ECO:0000250" key="1"/>
<evidence type="ECO:0000250" key="2">
    <source>
        <dbReference type="UniProtKB" id="O15111"/>
    </source>
</evidence>
<evidence type="ECO:0000255" key="3">
    <source>
        <dbReference type="PROSITE-ProRule" id="PRU00159"/>
    </source>
</evidence>
<evidence type="ECO:0000255" key="4">
    <source>
        <dbReference type="PROSITE-ProRule" id="PRU10027"/>
    </source>
</evidence>
<gene>
    <name type="primary">chuk</name>
    <name type="synonym">ikka</name>
    <name type="ORF">TEgg047h13.1</name>
</gene>
<protein>
    <recommendedName>
        <fullName>Inhibitor of nuclear factor kappa-B kinase subunit alpha</fullName>
        <shortName>I kappa-B kinase alpha</shortName>
        <shortName>IKK-A</shortName>
        <shortName>IKK-alpha</shortName>
        <shortName>IkBKA</shortName>
        <shortName>IkappaB kinase</shortName>
        <ecNumber evidence="2">2.7.11.10</ecNumber>
    </recommendedName>
    <alternativeName>
        <fullName>Conserved helix-loop-helix ubiquitous kinase</fullName>
    </alternativeName>
    <alternativeName>
        <fullName>Nuclear factor NF-kappa-B inhibitor kinase alpha</fullName>
        <shortName>NFKBIKA</shortName>
    </alternativeName>
</protein>